<sequence>MTESVFAVVVTHRRPDELAKSLDVLTAQTRLPDHLIVVDNDGCGDSPVRELVAGQPIATTYLGSRRNLGGAGGFALGMLHALAQGADWVWLADDDGHAQDARVLATLLACAEKYSLAEVSPMVCNIDDPTRLAFPLRRGLVWRRRASELRTEAGQELLPGIASLFNGALFRASTLAAIGVPDLRLFIRGDEVEMHRRLIRSGLPFGTCLDAAYLHPCGSDEFKPILCGRMHAQYPDDPGKRFFTYRNRGYVLSQPGLRKLLAQEWLRFGWFFLVTRRDPKGLWEWIRLRRLGRREKFGKPGGSA</sequence>
<feature type="chain" id="PRO_0000427227" description="Galactofuranosyltransferase GlfT1">
    <location>
        <begin position="1"/>
        <end position="304"/>
    </location>
</feature>
<accession>P9WMX2</accession>
<accession>L0TGJ5</accession>
<accession>Q79F98</accession>
<accession>Q7D4V6</accession>
<dbReference type="EC" id="2.4.1.287" evidence="1"/>
<dbReference type="EMBL" id="AE000516">
    <property type="protein sequence ID" value="AAK48256.1"/>
    <property type="molecule type" value="Genomic_DNA"/>
</dbReference>
<dbReference type="PIR" id="B70696">
    <property type="entry name" value="B70696"/>
</dbReference>
<dbReference type="RefSeq" id="WP_003420606.1">
    <property type="nucleotide sequence ID" value="NZ_KK341227.1"/>
</dbReference>
<dbReference type="SMR" id="P9WMX2"/>
<dbReference type="CAZy" id="GT2">
    <property type="family name" value="Glycosyltransferase Family 2"/>
</dbReference>
<dbReference type="KEGG" id="mtc:MT3891"/>
<dbReference type="PATRIC" id="fig|83331.31.peg.4186"/>
<dbReference type="HOGENOM" id="CLU_023845_2_2_11"/>
<dbReference type="UniPathway" id="UPA00963"/>
<dbReference type="Proteomes" id="UP000001020">
    <property type="component" value="Chromosome"/>
</dbReference>
<dbReference type="GO" id="GO:0005576">
    <property type="term" value="C:extracellular region"/>
    <property type="evidence" value="ECO:0007669"/>
    <property type="project" value="UniProtKB-KW"/>
</dbReference>
<dbReference type="GO" id="GO:0005886">
    <property type="term" value="C:plasma membrane"/>
    <property type="evidence" value="ECO:0007669"/>
    <property type="project" value="UniProtKB-SubCell"/>
</dbReference>
<dbReference type="GO" id="GO:0016757">
    <property type="term" value="F:glycosyltransferase activity"/>
    <property type="evidence" value="ECO:0007669"/>
    <property type="project" value="UniProtKB-KW"/>
</dbReference>
<dbReference type="GO" id="GO:0045227">
    <property type="term" value="P:capsule polysaccharide biosynthetic process"/>
    <property type="evidence" value="ECO:0007669"/>
    <property type="project" value="UniProtKB-UniPathway"/>
</dbReference>
<dbReference type="GO" id="GO:0071555">
    <property type="term" value="P:cell wall organization"/>
    <property type="evidence" value="ECO:0007669"/>
    <property type="project" value="UniProtKB-KW"/>
</dbReference>
<dbReference type="FunFam" id="3.90.550.60:FF:000002">
    <property type="entry name" value="Galactofuranosyl transferase GlfT1"/>
    <property type="match status" value="1"/>
</dbReference>
<dbReference type="Gene3D" id="3.90.550.60">
    <property type="match status" value="1"/>
</dbReference>
<dbReference type="InterPro" id="IPR001173">
    <property type="entry name" value="Glyco_trans_2-like"/>
</dbReference>
<dbReference type="InterPro" id="IPR029044">
    <property type="entry name" value="Nucleotide-diphossugar_trans"/>
</dbReference>
<dbReference type="PANTHER" id="PTHR43179:SF12">
    <property type="entry name" value="GALACTOFURANOSYLTRANSFERASE GLFT2"/>
    <property type="match status" value="1"/>
</dbReference>
<dbReference type="PANTHER" id="PTHR43179">
    <property type="entry name" value="RHAMNOSYLTRANSFERASE WBBL"/>
    <property type="match status" value="1"/>
</dbReference>
<dbReference type="Pfam" id="PF00535">
    <property type="entry name" value="Glycos_transf_2"/>
    <property type="match status" value="1"/>
</dbReference>
<dbReference type="SUPFAM" id="SSF53448">
    <property type="entry name" value="Nucleotide-diphospho-sugar transferases"/>
    <property type="match status" value="1"/>
</dbReference>
<proteinExistence type="inferred from homology"/>
<keyword id="KW-1003">Cell membrane</keyword>
<keyword id="KW-0134">Cell wall</keyword>
<keyword id="KW-0961">Cell wall biogenesis/degradation</keyword>
<keyword id="KW-0328">Glycosyltransferase</keyword>
<keyword id="KW-0472">Membrane</keyword>
<keyword id="KW-1185">Reference proteome</keyword>
<keyword id="KW-0964">Secreted</keyword>
<keyword id="KW-0808">Transferase</keyword>
<comment type="function">
    <text evidence="1">Involved in the biosynthesis of the arabinogalactan (AG) region of the mycolylarabinogalactan-peptidoglycan (mAGP) complex, an essential component of the mycobacterial cell wall. Catalyzes the transfer of the first two galactofuranosyl (Galf) units from UDP-galactofuranose (UDP-Galf) onto the rhamnosyl-GlcNAc-diphospho-decaprenol (Rha-GlcNAc-PP-C50) acceptor, yielding galactofuranosyl-galactofuranosyl-rhamnosyl-GlcNAc-diphospho-decaprenol (Galf-Galf-Rha-GlcNAc-PP-C50). Thus, GlfT1 is the initiator of galactan synthesis, while GlfT2 continues with the subsequent polymerization events.</text>
</comment>
<comment type="catalytic activity">
    <reaction evidence="1">
        <text>alpha-L-rhamnosyl-(1-&gt;3)-N-acetyl-alpha-D-glucosaminyl-diphospho-trans,octa-cis-decaprenol + 2 UDP-alpha-D-galactofuranose = beta-D-galactofuranosyl-(1-&gt;5)-beta-D-galactofuranosyl-(1-&gt;4)-alpha-L-rhamnosyl-(1-&gt;3)-N-acetyl-alpha-D-glucosaminyl-diphospho-trans,octa-cis-decaprenol + 2 UDP + 2 H(+)</text>
        <dbReference type="Rhea" id="RHEA:34379"/>
        <dbReference type="ChEBI" id="CHEBI:15378"/>
        <dbReference type="ChEBI" id="CHEBI:58223"/>
        <dbReference type="ChEBI" id="CHEBI:66915"/>
        <dbReference type="ChEBI" id="CHEBI:67209"/>
        <dbReference type="ChEBI" id="CHEBI:67210"/>
        <dbReference type="EC" id="2.4.1.287"/>
    </reaction>
</comment>
<comment type="pathway">
    <text evidence="1">Cell wall biogenesis; cell wall polysaccharide biosynthesis.</text>
</comment>
<comment type="subunit">
    <text evidence="1">Is probably part of an AG biosynthetic complex.</text>
</comment>
<comment type="subcellular location">
    <subcellularLocation>
        <location evidence="1">Cell membrane</location>
    </subcellularLocation>
    <subcellularLocation>
        <location evidence="1">Secreted</location>
        <location evidence="1">Cell wall</location>
    </subcellularLocation>
</comment>
<comment type="similarity">
    <text evidence="2">Belongs to the glycosyltransferase 2 family.</text>
</comment>
<protein>
    <recommendedName>
        <fullName evidence="1">Galactofuranosyltransferase GlfT1</fullName>
        <shortName evidence="1">GalTr 1</shortName>
        <ecNumber evidence="1">2.4.1.287</ecNumber>
    </recommendedName>
    <alternativeName>
        <fullName evidence="1">Arabinogalactan galactosyltransferase 1</fullName>
    </alternativeName>
    <alternativeName>
        <fullName evidence="1">Rhamnopyranosyl-N-acetylglucosaminyl-diphospho-decaprenol beta-1,4/1,5-galactofuranosyltransferase</fullName>
    </alternativeName>
    <alternativeName>
        <fullName evidence="1">UDP-Galf:alpha-3-L-rhamnosyl-alpha-D-GlcNAc-pyrophosphate polyprenol, galactofuranosyl transferase</fullName>
    </alternativeName>
</protein>
<reference key="1">
    <citation type="journal article" date="2002" name="J. Bacteriol.">
        <title>Whole-genome comparison of Mycobacterium tuberculosis clinical and laboratory strains.</title>
        <authorList>
            <person name="Fleischmann R.D."/>
            <person name="Alland D."/>
            <person name="Eisen J.A."/>
            <person name="Carpenter L."/>
            <person name="White O."/>
            <person name="Peterson J.D."/>
            <person name="DeBoy R.T."/>
            <person name="Dodson R.J."/>
            <person name="Gwinn M.L."/>
            <person name="Haft D.H."/>
            <person name="Hickey E.K."/>
            <person name="Kolonay J.F."/>
            <person name="Nelson W.C."/>
            <person name="Umayam L.A."/>
            <person name="Ermolaeva M.D."/>
            <person name="Salzberg S.L."/>
            <person name="Delcher A."/>
            <person name="Utterback T.R."/>
            <person name="Weidman J.F."/>
            <person name="Khouri H.M."/>
            <person name="Gill J."/>
            <person name="Mikula A."/>
            <person name="Bishai W."/>
            <person name="Jacobs W.R. Jr."/>
            <person name="Venter J.C."/>
            <person name="Fraser C.M."/>
        </authorList>
    </citation>
    <scope>NUCLEOTIDE SEQUENCE [LARGE SCALE GENOMIC DNA]</scope>
    <source>
        <strain>CDC 1551 / Oshkosh</strain>
    </source>
</reference>
<gene>
    <name evidence="1" type="primary">glfT1</name>
    <name type="ordered locus">MT3891</name>
</gene>
<evidence type="ECO:0000250" key="1">
    <source>
        <dbReference type="UniProtKB" id="P9WMX3"/>
    </source>
</evidence>
<evidence type="ECO:0000305" key="2"/>
<organism>
    <name type="scientific">Mycobacterium tuberculosis (strain CDC 1551 / Oshkosh)</name>
    <dbReference type="NCBI Taxonomy" id="83331"/>
    <lineage>
        <taxon>Bacteria</taxon>
        <taxon>Bacillati</taxon>
        <taxon>Actinomycetota</taxon>
        <taxon>Actinomycetes</taxon>
        <taxon>Mycobacteriales</taxon>
        <taxon>Mycobacteriaceae</taxon>
        <taxon>Mycobacterium</taxon>
        <taxon>Mycobacterium tuberculosis complex</taxon>
    </lineage>
</organism>
<name>GLFT1_MYCTO</name>